<protein>
    <recommendedName>
        <fullName evidence="1">Small ribosomal subunit protein uS19</fullName>
    </recommendedName>
    <alternativeName>
        <fullName>30S ribosomal protein S19</fullName>
    </alternativeName>
</protein>
<comment type="function">
    <text evidence="1">Protein S19 forms a complex with S13 that binds strongly to the 16S ribosomal RNA.</text>
</comment>
<comment type="similarity">
    <text evidence="1">Belongs to the universal ribosomal protein uS19 family.</text>
</comment>
<dbReference type="EMBL" id="CP001130">
    <property type="protein sequence ID" value="ACG56959.1"/>
    <property type="molecule type" value="Genomic_DNA"/>
</dbReference>
<dbReference type="SMR" id="B4U748"/>
<dbReference type="STRING" id="380749.HY04AAS1_0269"/>
<dbReference type="KEGG" id="hya:HY04AAS1_0269"/>
<dbReference type="eggNOG" id="COG0185">
    <property type="taxonomic scope" value="Bacteria"/>
</dbReference>
<dbReference type="HOGENOM" id="CLU_124823_0_0_0"/>
<dbReference type="OrthoDB" id="9797833at2"/>
<dbReference type="GO" id="GO:0005737">
    <property type="term" value="C:cytoplasm"/>
    <property type="evidence" value="ECO:0007669"/>
    <property type="project" value="UniProtKB-ARBA"/>
</dbReference>
<dbReference type="GO" id="GO:0015935">
    <property type="term" value="C:small ribosomal subunit"/>
    <property type="evidence" value="ECO:0007669"/>
    <property type="project" value="InterPro"/>
</dbReference>
<dbReference type="GO" id="GO:0019843">
    <property type="term" value="F:rRNA binding"/>
    <property type="evidence" value="ECO:0007669"/>
    <property type="project" value="UniProtKB-UniRule"/>
</dbReference>
<dbReference type="GO" id="GO:0003735">
    <property type="term" value="F:structural constituent of ribosome"/>
    <property type="evidence" value="ECO:0007669"/>
    <property type="project" value="InterPro"/>
</dbReference>
<dbReference type="GO" id="GO:0000028">
    <property type="term" value="P:ribosomal small subunit assembly"/>
    <property type="evidence" value="ECO:0007669"/>
    <property type="project" value="TreeGrafter"/>
</dbReference>
<dbReference type="GO" id="GO:0006412">
    <property type="term" value="P:translation"/>
    <property type="evidence" value="ECO:0007669"/>
    <property type="project" value="UniProtKB-UniRule"/>
</dbReference>
<dbReference type="FunFam" id="3.30.860.10:FF:000001">
    <property type="entry name" value="30S ribosomal protein S19"/>
    <property type="match status" value="1"/>
</dbReference>
<dbReference type="Gene3D" id="3.30.860.10">
    <property type="entry name" value="30s Ribosomal Protein S19, Chain A"/>
    <property type="match status" value="1"/>
</dbReference>
<dbReference type="HAMAP" id="MF_00531">
    <property type="entry name" value="Ribosomal_uS19"/>
    <property type="match status" value="1"/>
</dbReference>
<dbReference type="InterPro" id="IPR002222">
    <property type="entry name" value="Ribosomal_uS19"/>
</dbReference>
<dbReference type="InterPro" id="IPR005732">
    <property type="entry name" value="Ribosomal_uS19_bac-type"/>
</dbReference>
<dbReference type="InterPro" id="IPR020934">
    <property type="entry name" value="Ribosomal_uS19_CS"/>
</dbReference>
<dbReference type="InterPro" id="IPR023575">
    <property type="entry name" value="Ribosomal_uS19_SF"/>
</dbReference>
<dbReference type="NCBIfam" id="TIGR01050">
    <property type="entry name" value="rpsS_bact"/>
    <property type="match status" value="1"/>
</dbReference>
<dbReference type="PANTHER" id="PTHR11880">
    <property type="entry name" value="RIBOSOMAL PROTEIN S19P FAMILY MEMBER"/>
    <property type="match status" value="1"/>
</dbReference>
<dbReference type="PANTHER" id="PTHR11880:SF8">
    <property type="entry name" value="SMALL RIBOSOMAL SUBUNIT PROTEIN US19M"/>
    <property type="match status" value="1"/>
</dbReference>
<dbReference type="Pfam" id="PF00203">
    <property type="entry name" value="Ribosomal_S19"/>
    <property type="match status" value="1"/>
</dbReference>
<dbReference type="PRINTS" id="PR00975">
    <property type="entry name" value="RIBOSOMALS19"/>
</dbReference>
<dbReference type="SUPFAM" id="SSF54570">
    <property type="entry name" value="Ribosomal protein S19"/>
    <property type="match status" value="1"/>
</dbReference>
<dbReference type="PROSITE" id="PS00323">
    <property type="entry name" value="RIBOSOMAL_S19"/>
    <property type="match status" value="1"/>
</dbReference>
<keyword id="KW-0687">Ribonucleoprotein</keyword>
<keyword id="KW-0689">Ribosomal protein</keyword>
<keyword id="KW-0694">RNA-binding</keyword>
<keyword id="KW-0699">rRNA-binding</keyword>
<name>RS19_HYDS0</name>
<accession>B4U748</accession>
<proteinExistence type="inferred from homology"/>
<gene>
    <name evidence="1" type="primary">rpsS</name>
    <name type="ordered locus">HY04AAS1_0269</name>
</gene>
<feature type="chain" id="PRO_0000354307" description="Small ribosomal subunit protein uS19">
    <location>
        <begin position="1"/>
        <end position="153"/>
    </location>
</feature>
<feature type="region of interest" description="Unknown">
    <location>
        <begin position="1"/>
        <end position="63"/>
    </location>
</feature>
<feature type="region of interest" description="Small ribosomal subunit protein uS19">
    <location>
        <begin position="64"/>
        <end position="153"/>
    </location>
</feature>
<organism>
    <name type="scientific">Hydrogenobaculum sp. (strain Y04AAS1)</name>
    <dbReference type="NCBI Taxonomy" id="380749"/>
    <lineage>
        <taxon>Bacteria</taxon>
        <taxon>Pseudomonadati</taxon>
        <taxon>Aquificota</taxon>
        <taxon>Aquificia</taxon>
        <taxon>Aquificales</taxon>
        <taxon>Aquificaceae</taxon>
        <taxon>Hydrogenobaculum</taxon>
    </lineage>
</organism>
<evidence type="ECO:0000255" key="1">
    <source>
        <dbReference type="HAMAP-Rule" id="MF_00531"/>
    </source>
</evidence>
<sequence length="153" mass="18091">MGFRGAWNKRNRLIEDLDTFLKLYKKAQKAYKKVRKVEFSNNDELIENAKKRYQEIWDEFRAFVNKKAWVDPKLWATIRKMNQTGDRKVVKTYSRDSQVISDFVNHTIAVHNGKTFVPIYITPEMVGHKLGEFAPTRTFRSHPEKSAKVVKKK</sequence>
<reference key="1">
    <citation type="journal article" date="2009" name="J. Bacteriol.">
        <title>Complete and draft genome sequences of six members of the Aquificales.</title>
        <authorList>
            <person name="Reysenbach A.-L."/>
            <person name="Hamamura N."/>
            <person name="Podar M."/>
            <person name="Griffiths E."/>
            <person name="Ferreira S."/>
            <person name="Hochstein R."/>
            <person name="Heidelberg J."/>
            <person name="Johnson J."/>
            <person name="Mead D."/>
            <person name="Pohorille A."/>
            <person name="Sarmiento M."/>
            <person name="Schweighofer K."/>
            <person name="Seshadri R."/>
            <person name="Voytek M.A."/>
        </authorList>
    </citation>
    <scope>NUCLEOTIDE SEQUENCE [LARGE SCALE GENOMIC DNA]</scope>
    <source>
        <strain>Y04AAS1</strain>
    </source>
</reference>